<feature type="chain" id="PRO_1000212259" description="GTP cyclohydrolase III">
    <location>
        <begin position="1"/>
        <end position="230"/>
    </location>
</feature>
<name>GCH3_SACI3</name>
<dbReference type="EC" id="3.5.4.29" evidence="1"/>
<dbReference type="EMBL" id="CP001401">
    <property type="protein sequence ID" value="ACP55695.1"/>
    <property type="molecule type" value="Genomic_DNA"/>
</dbReference>
<dbReference type="RefSeq" id="WP_012718947.1">
    <property type="nucleotide sequence ID" value="NC_012632.1"/>
</dbReference>
<dbReference type="SMR" id="C3MZ63"/>
<dbReference type="GeneID" id="7812484"/>
<dbReference type="KEGG" id="sim:M1627_1820"/>
<dbReference type="HOGENOM" id="CLU_080076_0_0_2"/>
<dbReference type="Proteomes" id="UP000002307">
    <property type="component" value="Chromosome"/>
</dbReference>
<dbReference type="GO" id="GO:0005525">
    <property type="term" value="F:GTP binding"/>
    <property type="evidence" value="ECO:0007669"/>
    <property type="project" value="UniProtKB-KW"/>
</dbReference>
<dbReference type="GO" id="GO:0043740">
    <property type="term" value="F:GTP cyclohydrolase IIa activity"/>
    <property type="evidence" value="ECO:0007669"/>
    <property type="project" value="UniProtKB-EC"/>
</dbReference>
<dbReference type="GO" id="GO:0009058">
    <property type="term" value="P:biosynthetic process"/>
    <property type="evidence" value="ECO:0007669"/>
    <property type="project" value="InterPro"/>
</dbReference>
<dbReference type="Gene3D" id="3.30.70.270">
    <property type="match status" value="1"/>
</dbReference>
<dbReference type="Gene3D" id="3.30.70.1230">
    <property type="entry name" value="Nucleotide cyclase"/>
    <property type="match status" value="1"/>
</dbReference>
<dbReference type="HAMAP" id="MF_00608">
    <property type="entry name" value="GTP_cyclohydro_3"/>
    <property type="match status" value="1"/>
</dbReference>
<dbReference type="InterPro" id="IPR007839">
    <property type="entry name" value="GTP_CycHdrlase_3"/>
</dbReference>
<dbReference type="InterPro" id="IPR029787">
    <property type="entry name" value="Nucleotide_cyclase"/>
</dbReference>
<dbReference type="InterPro" id="IPR043128">
    <property type="entry name" value="Rev_trsase/Diguanyl_cyclase"/>
</dbReference>
<dbReference type="PANTHER" id="PTHR42202">
    <property type="entry name" value="GTP CYCLOHYDROLASE III"/>
    <property type="match status" value="1"/>
</dbReference>
<dbReference type="PANTHER" id="PTHR42202:SF1">
    <property type="entry name" value="GTP CYCLOHYDROLASE III"/>
    <property type="match status" value="1"/>
</dbReference>
<dbReference type="Pfam" id="PF05165">
    <property type="entry name" value="GCH_III"/>
    <property type="match status" value="1"/>
</dbReference>
<dbReference type="PIRSF" id="PIRSF009265">
    <property type="entry name" value="GTP_cyclohydro_3"/>
    <property type="match status" value="1"/>
</dbReference>
<sequence length="230" mass="26734">MKVLAIKLVDYREWTERLGYDREWLIQKIQNKFMMKIHEIASQYSTFPLQLRFDNLLMIVDGITNTQLIYMINDMQENLPVGIKTCLGYGKTPLEAQWNASVCLNNKEDKFKEYVDEKIAALHFDINFNTEALKYTSVYDSFLEITNIYVDLSRFLYKIGGILQYLGGDNYLGFVSTNSVNKVIEKFSDDNKIKVGIGIGQNARTAIKLATTSLEKIRNNREKTWHIEEE</sequence>
<proteinExistence type="inferred from homology"/>
<comment type="function">
    <text evidence="1">Catalyzes the formation of 2-amino-5-formylamino-6-ribofuranosylamino-4(3H)-pyrimidinone ribonucleotide monophosphate and inorganic phosphate from GTP. Also has an independent pyrophosphate phosphohydrolase activity.</text>
</comment>
<comment type="catalytic activity">
    <reaction evidence="1">
        <text>GTP + 3 H2O = 2-amino-5-formylamino-6-(5-phospho-D-ribosylamino)pyrimidin-4(3H)-one + 2 phosphate + 2 H(+)</text>
        <dbReference type="Rhea" id="RHEA:22468"/>
        <dbReference type="ChEBI" id="CHEBI:15377"/>
        <dbReference type="ChEBI" id="CHEBI:15378"/>
        <dbReference type="ChEBI" id="CHEBI:37565"/>
        <dbReference type="ChEBI" id="CHEBI:43474"/>
        <dbReference type="ChEBI" id="CHEBI:57258"/>
        <dbReference type="EC" id="3.5.4.29"/>
    </reaction>
</comment>
<comment type="similarity">
    <text evidence="1">Belongs to the archaeal-type GTP cyclohydrolase family.</text>
</comment>
<gene>
    <name evidence="1" type="primary">gch3</name>
    <name type="ordered locus">M1627_1820</name>
</gene>
<reference key="1">
    <citation type="journal article" date="2009" name="Proc. Natl. Acad. Sci. U.S.A.">
        <title>Biogeography of the Sulfolobus islandicus pan-genome.</title>
        <authorList>
            <person name="Reno M.L."/>
            <person name="Held N.L."/>
            <person name="Fields C.J."/>
            <person name="Burke P.V."/>
            <person name="Whitaker R.J."/>
        </authorList>
    </citation>
    <scope>NUCLEOTIDE SEQUENCE [LARGE SCALE GENOMIC DNA]</scope>
    <source>
        <strain>M.16.27</strain>
    </source>
</reference>
<accession>C3MZ63</accession>
<keyword id="KW-0342">GTP-binding</keyword>
<keyword id="KW-0378">Hydrolase</keyword>
<keyword id="KW-0547">Nucleotide-binding</keyword>
<organism>
    <name type="scientific">Saccharolobus islandicus (strain M.16.27)</name>
    <name type="common">Sulfolobus islandicus</name>
    <dbReference type="NCBI Taxonomy" id="427318"/>
    <lineage>
        <taxon>Archaea</taxon>
        <taxon>Thermoproteota</taxon>
        <taxon>Thermoprotei</taxon>
        <taxon>Sulfolobales</taxon>
        <taxon>Sulfolobaceae</taxon>
        <taxon>Saccharolobus</taxon>
    </lineage>
</organism>
<evidence type="ECO:0000255" key="1">
    <source>
        <dbReference type="HAMAP-Rule" id="MF_00608"/>
    </source>
</evidence>
<protein>
    <recommendedName>
        <fullName evidence="1">GTP cyclohydrolase III</fullName>
        <ecNumber evidence="1">3.5.4.29</ecNumber>
    </recommendedName>
</protein>